<dbReference type="EC" id="3.5.1.102" evidence="2"/>
<dbReference type="EMBL" id="CP001696">
    <property type="protein sequence ID" value="ACV24638.1"/>
    <property type="molecule type" value="Genomic_DNA"/>
</dbReference>
<dbReference type="RefSeq" id="WP_015791375.1">
    <property type="nucleotide sequence ID" value="NC_013156.1"/>
</dbReference>
<dbReference type="SMR" id="C7P7V6"/>
<dbReference type="STRING" id="573064.Mefer_0820"/>
<dbReference type="GeneID" id="8365496"/>
<dbReference type="KEGG" id="mfe:Mefer_0820"/>
<dbReference type="eggNOG" id="arCOG04536">
    <property type="taxonomic scope" value="Archaea"/>
</dbReference>
<dbReference type="HOGENOM" id="CLU_1192640_0_0_2"/>
<dbReference type="OrthoDB" id="46121at2157"/>
<dbReference type="UniPathway" id="UPA00071"/>
<dbReference type="UniPathway" id="UPA00275"/>
<dbReference type="Proteomes" id="UP000001495">
    <property type="component" value="Chromosome"/>
</dbReference>
<dbReference type="GO" id="GO:0043729">
    <property type="term" value="F:2-amino-5-formylamino-6-(5-phosphoribosylamino)pyrimidin-4(3H)-one formate-lyase activity"/>
    <property type="evidence" value="ECO:0007669"/>
    <property type="project" value="UniProtKB-EC"/>
</dbReference>
<dbReference type="GO" id="GO:0008198">
    <property type="term" value="F:ferrous iron binding"/>
    <property type="evidence" value="ECO:0007669"/>
    <property type="project" value="UniProtKB-UniRule"/>
</dbReference>
<dbReference type="GO" id="GO:0052645">
    <property type="term" value="P:F420-0 metabolic process"/>
    <property type="evidence" value="ECO:0007669"/>
    <property type="project" value="UniProtKB-UniRule"/>
</dbReference>
<dbReference type="GO" id="GO:0009231">
    <property type="term" value="P:riboflavin biosynthetic process"/>
    <property type="evidence" value="ECO:0007669"/>
    <property type="project" value="UniProtKB-UniRule"/>
</dbReference>
<dbReference type="Gene3D" id="3.40.50.10310">
    <property type="entry name" value="Creatininase"/>
    <property type="match status" value="1"/>
</dbReference>
<dbReference type="HAMAP" id="MF_02116">
    <property type="entry name" value="FAPy_deform"/>
    <property type="match status" value="1"/>
</dbReference>
<dbReference type="InterPro" id="IPR024087">
    <property type="entry name" value="Creatininase-like_sf"/>
</dbReference>
<dbReference type="InterPro" id="IPR003785">
    <property type="entry name" value="Creatininase/forma_Hydrolase"/>
</dbReference>
<dbReference type="InterPro" id="IPR024901">
    <property type="entry name" value="FAPy_deformylase"/>
</dbReference>
<dbReference type="NCBIfam" id="NF033501">
    <property type="entry name" value="ArfB_arch_rifla"/>
    <property type="match status" value="1"/>
</dbReference>
<dbReference type="PANTHER" id="PTHR35005:SF1">
    <property type="entry name" value="2-AMINO-5-FORMYLAMINO-6-RIBOSYLAMINOPYRIMIDIN-4(3H)-ONE 5'-MONOPHOSPHATE DEFORMYLASE"/>
    <property type="match status" value="1"/>
</dbReference>
<dbReference type="PANTHER" id="PTHR35005">
    <property type="entry name" value="3-DEHYDRO-SCYLLO-INOSOSE HYDROLASE"/>
    <property type="match status" value="1"/>
</dbReference>
<dbReference type="Pfam" id="PF02633">
    <property type="entry name" value="Creatininase"/>
    <property type="match status" value="1"/>
</dbReference>
<dbReference type="SUPFAM" id="SSF102215">
    <property type="entry name" value="Creatininase"/>
    <property type="match status" value="1"/>
</dbReference>
<protein>
    <recommendedName>
        <fullName evidence="2">2-amino-5-formylamino-6-ribosylaminopyrimidin-4(3H)-one 5'-monophosphate deformylase</fullName>
        <shortName evidence="2">FAPy deformylase</shortName>
        <ecNumber evidence="2">3.5.1.102</ecNumber>
    </recommendedName>
    <alternativeName>
        <fullName evidence="2">Formamide hydrolase</fullName>
    </alternativeName>
</protein>
<keyword id="KW-0378">Hydrolase</keyword>
<keyword id="KW-0408">Iron</keyword>
<keyword id="KW-0479">Metal-binding</keyword>
<keyword id="KW-0862">Zinc</keyword>
<proteinExistence type="inferred from homology"/>
<name>ARFB_METFA</name>
<comment type="function">
    <text evidence="2">Catalyzes the hydrolysis of the formamide of 2-amino-5-formylamino-6-ribosylamino-4(3H)-pyrimidinone 5'-monophosphate (FAPy) to form 2,5-diamino-6-ribosylamino-4(3H)-pyrimidinone 5'-phosphate (APy).</text>
</comment>
<comment type="catalytic activity">
    <reaction evidence="2">
        <text>2-amino-5-formylamino-6-(5-phospho-D-ribosylamino)pyrimidin-4(3H)-one + H2O = 2,5-diamino-6-(1-D-ribosylamino)pyrimidin-4(3H)-one 5'-phosphate + formate + H(+)</text>
        <dbReference type="Rhea" id="RHEA:27282"/>
        <dbReference type="ChEBI" id="CHEBI:15377"/>
        <dbReference type="ChEBI" id="CHEBI:15378"/>
        <dbReference type="ChEBI" id="CHEBI:15740"/>
        <dbReference type="ChEBI" id="CHEBI:57258"/>
        <dbReference type="ChEBI" id="CHEBI:59545"/>
        <dbReference type="EC" id="3.5.1.102"/>
    </reaction>
</comment>
<comment type="cofactor">
    <cofactor evidence="1">
        <name>Fe(2+)</name>
        <dbReference type="ChEBI" id="CHEBI:29033"/>
    </cofactor>
    <text evidence="1">Requires one Fe(2+) ion for activity.</text>
</comment>
<comment type="cofactor">
    <cofactor evidence="1">
        <name>Fe(2+)</name>
        <dbReference type="ChEBI" id="CHEBI:29033"/>
    </cofactor>
    <cofactor evidence="1">
        <name>Zn(2+)</name>
        <dbReference type="ChEBI" id="CHEBI:29105"/>
    </cofactor>
    <text evidence="1">Requires an additional second metal ion that could be Fe(2+) or Zn(2+).</text>
</comment>
<comment type="pathway">
    <text evidence="2">Cofactor biosynthesis; coenzyme F420 biosynthesis.</text>
</comment>
<comment type="pathway">
    <text evidence="2">Cofactor biosynthesis; riboflavin biosynthesis.</text>
</comment>
<comment type="subunit">
    <text evidence="2">Homodimer.</text>
</comment>
<comment type="similarity">
    <text evidence="2">Belongs to the creatininase superfamily. FAPy deformylase family.</text>
</comment>
<reference key="1">
    <citation type="submission" date="2009-08" db="EMBL/GenBank/DDBJ databases">
        <title>Complete sequence of chromosome of Methanocaldococcus fervens AG86.</title>
        <authorList>
            <consortium name="US DOE Joint Genome Institute"/>
            <person name="Lucas S."/>
            <person name="Copeland A."/>
            <person name="Lapidus A."/>
            <person name="Glavina del Rio T."/>
            <person name="Tice H."/>
            <person name="Bruce D."/>
            <person name="Goodwin L."/>
            <person name="Pitluck S."/>
            <person name="Chertkov O."/>
            <person name="Detter J.C."/>
            <person name="Han C."/>
            <person name="Tapia R."/>
            <person name="Larimer F."/>
            <person name="Land M."/>
            <person name="Hauser L."/>
            <person name="Kyrpides N."/>
            <person name="Ovchinnikova G."/>
            <person name="Lupa-Sieprawska M."/>
            <person name="Whitman W.B."/>
        </authorList>
    </citation>
    <scope>NUCLEOTIDE SEQUENCE [LARGE SCALE GENOMIC DNA]</scope>
    <source>
        <strain>DSM 4213 / JCM 15782 / AG86</strain>
    </source>
</reference>
<gene>
    <name evidence="2" type="primary">arfB</name>
    <name type="ordered locus">Mefer_0820</name>
</gene>
<accession>C7P7V6</accession>
<feature type="chain" id="PRO_0000406920" description="2-amino-5-formylamino-6-ribosylaminopyrimidin-4(3H)-one 5'-monophosphate deformylase">
    <location>
        <begin position="1"/>
        <end position="225"/>
    </location>
</feature>
<feature type="binding site" evidence="2">
    <location>
        <position position="28"/>
    </location>
    <ligand>
        <name>Fe cation</name>
        <dbReference type="ChEBI" id="CHEBI:24875"/>
        <label>1</label>
    </ligand>
</feature>
<feature type="binding site" evidence="2">
    <location>
        <position position="30"/>
    </location>
    <ligand>
        <name>Fe cation</name>
        <dbReference type="ChEBI" id="CHEBI:24875"/>
        <label>2</label>
    </ligand>
</feature>
<feature type="binding site" evidence="2">
    <location>
        <position position="39"/>
    </location>
    <ligand>
        <name>Fe cation</name>
        <dbReference type="ChEBI" id="CHEBI:24875"/>
        <label>1</label>
    </ligand>
</feature>
<feature type="binding site" evidence="2">
    <location>
        <position position="39"/>
    </location>
    <ligand>
        <name>Fe cation</name>
        <dbReference type="ChEBI" id="CHEBI:24875"/>
        <label>2</label>
    </ligand>
</feature>
<feature type="binding site" evidence="2">
    <location>
        <position position="107"/>
    </location>
    <ligand>
        <name>Fe cation</name>
        <dbReference type="ChEBI" id="CHEBI:24875"/>
        <label>1</label>
    </ligand>
</feature>
<sequence>MELRLSSGNILDEKVHKVGIIALGSFLENHGAVLPIDTDIKIASYIALKAAILTGAKFLGVVIPSTEYEYVKHGIHNKPEDIYYYLRFLINEGKKIGVEKFLIVNCHGGNILIEKFLKDLEYEFGVKVEMINIAFTHAATEEVSVGYVIGIAKADEKSLKEHNNFEKYPEVGMVGLKEARENNKAIDEEAKAVEKFGVRLDKNLGEKILNDAIEKVVDKVKEMIR</sequence>
<evidence type="ECO:0000250" key="1"/>
<evidence type="ECO:0000255" key="2">
    <source>
        <dbReference type="HAMAP-Rule" id="MF_02116"/>
    </source>
</evidence>
<organism>
    <name type="scientific">Methanocaldococcus fervens (strain DSM 4213 / JCM 15782 / AG86)</name>
    <name type="common">Methanococcus fervens</name>
    <dbReference type="NCBI Taxonomy" id="573064"/>
    <lineage>
        <taxon>Archaea</taxon>
        <taxon>Methanobacteriati</taxon>
        <taxon>Methanobacteriota</taxon>
        <taxon>Methanomada group</taxon>
        <taxon>Methanococci</taxon>
        <taxon>Methanococcales</taxon>
        <taxon>Methanocaldococcaceae</taxon>
        <taxon>Methanocaldococcus</taxon>
    </lineage>
</organism>